<name>RHAM_SALTI</name>
<sequence length="104" mass="12334">MIRKAFVMQVNADAHEEYQRRHNPIWPELEAVLKSHGAHHYAIYLDQERNLLFATVEIESEERWNAVASTDVCQRWWKHMRDVMPANPDNSPVSAELKEVFYLQ</sequence>
<proteinExistence type="inferred from homology"/>
<keyword id="KW-0119">Carbohydrate metabolism</keyword>
<keyword id="KW-0963">Cytoplasm</keyword>
<keyword id="KW-0413">Isomerase</keyword>
<keyword id="KW-0684">Rhamnose metabolism</keyword>
<evidence type="ECO:0000255" key="1">
    <source>
        <dbReference type="HAMAP-Rule" id="MF_01663"/>
    </source>
</evidence>
<accession>Q8XF56</accession>
<accession>Q7AM27</accession>
<comment type="function">
    <text evidence="1">Involved in the anomeric conversion of L-rhamnose.</text>
</comment>
<comment type="catalytic activity">
    <reaction evidence="1">
        <text>alpha-L-rhamnose = beta-L-rhamnose</text>
        <dbReference type="Rhea" id="RHEA:25584"/>
        <dbReference type="ChEBI" id="CHEBI:27586"/>
        <dbReference type="ChEBI" id="CHEBI:27907"/>
        <dbReference type="EC" id="5.1.3.32"/>
    </reaction>
</comment>
<comment type="pathway">
    <text evidence="1">Carbohydrate metabolism; L-rhamnose metabolism.</text>
</comment>
<comment type="subunit">
    <text evidence="1">Homodimer.</text>
</comment>
<comment type="subcellular location">
    <subcellularLocation>
        <location evidence="1">Cytoplasm</location>
    </subcellularLocation>
</comment>
<comment type="similarity">
    <text evidence="1">Belongs to the rhamnose mutarotase family.</text>
</comment>
<feature type="chain" id="PRO_0000344602" description="L-rhamnose mutarotase">
    <location>
        <begin position="1"/>
        <end position="104"/>
    </location>
</feature>
<feature type="active site" description="Proton donor" evidence="1">
    <location>
        <position position="22"/>
    </location>
</feature>
<feature type="binding site" evidence="1">
    <location>
        <position position="18"/>
    </location>
    <ligand>
        <name>substrate</name>
    </ligand>
</feature>
<feature type="binding site" evidence="1">
    <location>
        <position position="41"/>
    </location>
    <ligand>
        <name>substrate</name>
    </ligand>
</feature>
<feature type="binding site" evidence="1">
    <location>
        <begin position="76"/>
        <end position="77"/>
    </location>
    <ligand>
        <name>substrate</name>
    </ligand>
</feature>
<protein>
    <recommendedName>
        <fullName evidence="1">L-rhamnose mutarotase</fullName>
        <ecNumber evidence="1">5.1.3.32</ecNumber>
    </recommendedName>
    <alternativeName>
        <fullName evidence="1">Rhamnose 1-epimerase</fullName>
    </alternativeName>
    <alternativeName>
        <fullName evidence="1">Type-3 mutarotase</fullName>
    </alternativeName>
</protein>
<dbReference type="EC" id="5.1.3.32" evidence="1"/>
<dbReference type="EMBL" id="AE014613">
    <property type="protein sequence ID" value="AAO71079.1"/>
    <property type="molecule type" value="Genomic_DNA"/>
</dbReference>
<dbReference type="EMBL" id="AL513382">
    <property type="protein sequence ID" value="CAD09581.1"/>
    <property type="molecule type" value="Genomic_DNA"/>
</dbReference>
<dbReference type="RefSeq" id="NP_458006.1">
    <property type="nucleotide sequence ID" value="NC_003198.1"/>
</dbReference>
<dbReference type="RefSeq" id="WP_000619478.1">
    <property type="nucleotide sequence ID" value="NZ_WSUR01000010.1"/>
</dbReference>
<dbReference type="SMR" id="Q8XF56"/>
<dbReference type="STRING" id="220341.gene:17587692"/>
<dbReference type="KEGG" id="stt:t3576"/>
<dbReference type="KEGG" id="sty:STY3831"/>
<dbReference type="PATRIC" id="fig|220341.7.peg.3911"/>
<dbReference type="eggNOG" id="COG3254">
    <property type="taxonomic scope" value="Bacteria"/>
</dbReference>
<dbReference type="HOGENOM" id="CLU_100689_2_0_6"/>
<dbReference type="OMA" id="WAYMADI"/>
<dbReference type="OrthoDB" id="9799608at2"/>
<dbReference type="UniPathway" id="UPA00125"/>
<dbReference type="Proteomes" id="UP000000541">
    <property type="component" value="Chromosome"/>
</dbReference>
<dbReference type="Proteomes" id="UP000002670">
    <property type="component" value="Chromosome"/>
</dbReference>
<dbReference type="GO" id="GO:0005737">
    <property type="term" value="C:cytoplasm"/>
    <property type="evidence" value="ECO:0007669"/>
    <property type="project" value="UniProtKB-SubCell"/>
</dbReference>
<dbReference type="GO" id="GO:0062192">
    <property type="term" value="F:L-rhamnose mutarotase activity"/>
    <property type="evidence" value="ECO:0007669"/>
    <property type="project" value="UniProtKB-EC"/>
</dbReference>
<dbReference type="GO" id="GO:0019301">
    <property type="term" value="P:rhamnose catabolic process"/>
    <property type="evidence" value="ECO:0007669"/>
    <property type="project" value="TreeGrafter"/>
</dbReference>
<dbReference type="Gene3D" id="3.30.70.100">
    <property type="match status" value="1"/>
</dbReference>
<dbReference type="HAMAP" id="MF_01663">
    <property type="entry name" value="L_rham_rotase"/>
    <property type="match status" value="1"/>
</dbReference>
<dbReference type="InterPro" id="IPR011008">
    <property type="entry name" value="Dimeric_a/b-barrel"/>
</dbReference>
<dbReference type="InterPro" id="IPR013448">
    <property type="entry name" value="L-rhamnose_mutarotase"/>
</dbReference>
<dbReference type="InterPro" id="IPR008000">
    <property type="entry name" value="Rham/fucose_mutarotase"/>
</dbReference>
<dbReference type="NCBIfam" id="TIGR02625">
    <property type="entry name" value="YiiL_rotase"/>
    <property type="match status" value="1"/>
</dbReference>
<dbReference type="PANTHER" id="PTHR34389">
    <property type="entry name" value="L-RHAMNOSE MUTAROTASE"/>
    <property type="match status" value="1"/>
</dbReference>
<dbReference type="PANTHER" id="PTHR34389:SF2">
    <property type="entry name" value="L-RHAMNOSE MUTAROTASE"/>
    <property type="match status" value="1"/>
</dbReference>
<dbReference type="Pfam" id="PF05336">
    <property type="entry name" value="rhaM"/>
    <property type="match status" value="1"/>
</dbReference>
<dbReference type="SUPFAM" id="SSF54909">
    <property type="entry name" value="Dimeric alpha+beta barrel"/>
    <property type="match status" value="1"/>
</dbReference>
<organism>
    <name type="scientific">Salmonella typhi</name>
    <dbReference type="NCBI Taxonomy" id="90370"/>
    <lineage>
        <taxon>Bacteria</taxon>
        <taxon>Pseudomonadati</taxon>
        <taxon>Pseudomonadota</taxon>
        <taxon>Gammaproteobacteria</taxon>
        <taxon>Enterobacterales</taxon>
        <taxon>Enterobacteriaceae</taxon>
        <taxon>Salmonella</taxon>
    </lineage>
</organism>
<reference key="1">
    <citation type="journal article" date="2003" name="J. Bacteriol.">
        <title>Comparative genomics of Salmonella enterica serovar Typhi strains Ty2 and CT18.</title>
        <authorList>
            <person name="Deng W."/>
            <person name="Liou S.-R."/>
            <person name="Plunkett G. III"/>
            <person name="Mayhew G.F."/>
            <person name="Rose D.J."/>
            <person name="Burland V."/>
            <person name="Kodoyianni V."/>
            <person name="Schwartz D.C."/>
            <person name="Blattner F.R."/>
        </authorList>
    </citation>
    <scope>NUCLEOTIDE SEQUENCE [LARGE SCALE GENOMIC DNA]</scope>
    <source>
        <strain>ATCC 700931 / Ty2</strain>
    </source>
</reference>
<reference key="2">
    <citation type="journal article" date="2001" name="Nature">
        <title>Complete genome sequence of a multiple drug resistant Salmonella enterica serovar Typhi CT18.</title>
        <authorList>
            <person name="Parkhill J."/>
            <person name="Dougan G."/>
            <person name="James K.D."/>
            <person name="Thomson N.R."/>
            <person name="Pickard D."/>
            <person name="Wain J."/>
            <person name="Churcher C.M."/>
            <person name="Mungall K.L."/>
            <person name="Bentley S.D."/>
            <person name="Holden M.T.G."/>
            <person name="Sebaihia M."/>
            <person name="Baker S."/>
            <person name="Basham D."/>
            <person name="Brooks K."/>
            <person name="Chillingworth T."/>
            <person name="Connerton P."/>
            <person name="Cronin A."/>
            <person name="Davis P."/>
            <person name="Davies R.M."/>
            <person name="Dowd L."/>
            <person name="White N."/>
            <person name="Farrar J."/>
            <person name="Feltwell T."/>
            <person name="Hamlin N."/>
            <person name="Haque A."/>
            <person name="Hien T.T."/>
            <person name="Holroyd S."/>
            <person name="Jagels K."/>
            <person name="Krogh A."/>
            <person name="Larsen T.S."/>
            <person name="Leather S."/>
            <person name="Moule S."/>
            <person name="O'Gaora P."/>
            <person name="Parry C."/>
            <person name="Quail M.A."/>
            <person name="Rutherford K.M."/>
            <person name="Simmonds M."/>
            <person name="Skelton J."/>
            <person name="Stevens K."/>
            <person name="Whitehead S."/>
            <person name="Barrell B.G."/>
        </authorList>
    </citation>
    <scope>NUCLEOTIDE SEQUENCE [LARGE SCALE GENOMIC DNA]</scope>
    <source>
        <strain>CT18</strain>
    </source>
</reference>
<gene>
    <name evidence="1" type="primary">rhaM</name>
    <name type="ordered locus">STY3831</name>
    <name type="ordered locus">t3576</name>
</gene>